<sequence>MASRRRMLLKVIILGDSGVGKTSLMNQYVNRKFSNQYKATIGADFLTKEVQFDDRLFTLQIWDTAGQERFQSLGVAFYRGADCCVLVHDVNVMKSFDNLNNWREEFLIQASPSDPENFPFVVLGNKVDVDGGNSRVVSEKKAKAWCASKGNIPYFETSAKEGFNVDAAFECIARNALKNEPEEEIYLPETIDVASGGRPQRSTGCEC</sequence>
<reference key="1">
    <citation type="online journal article" date="1999" name="Plant Gene Register">
        <title>A cDNA clone encoding a Rab7 protein from upland cotton (Gossypium hirsutum L.).</title>
        <authorList>
            <person name="Jenkins W.B."/>
            <person name="Turley R.B."/>
            <person name="Steele M."/>
        </authorList>
        <locator>PGR99-064</locator>
    </citation>
    <scope>NUCLEOTIDE SEQUENCE [MRNA]</scope>
    <source>
        <strain>cv. Deltapine 62</strain>
        <tissue>Etiolated cotyledon</tissue>
    </source>
</reference>
<protein>
    <recommendedName>
        <fullName>Ras-related protein Rab7</fullName>
    </recommendedName>
</protein>
<keyword id="KW-1003">Cell membrane</keyword>
<keyword id="KW-0342">GTP-binding</keyword>
<keyword id="KW-0449">Lipoprotein</keyword>
<keyword id="KW-0472">Membrane</keyword>
<keyword id="KW-0488">Methylation</keyword>
<keyword id="KW-0547">Nucleotide-binding</keyword>
<keyword id="KW-0636">Prenylation</keyword>
<keyword id="KW-0653">Protein transport</keyword>
<keyword id="KW-1185">Reference proteome</keyword>
<keyword id="KW-0813">Transport</keyword>
<organism>
    <name type="scientific">Gossypium hirsutum</name>
    <name type="common">Upland cotton</name>
    <name type="synonym">Gossypium mexicanum</name>
    <dbReference type="NCBI Taxonomy" id="3635"/>
    <lineage>
        <taxon>Eukaryota</taxon>
        <taxon>Viridiplantae</taxon>
        <taxon>Streptophyta</taxon>
        <taxon>Embryophyta</taxon>
        <taxon>Tracheophyta</taxon>
        <taxon>Spermatophyta</taxon>
        <taxon>Magnoliopsida</taxon>
        <taxon>eudicotyledons</taxon>
        <taxon>Gunneridae</taxon>
        <taxon>Pentapetalae</taxon>
        <taxon>rosids</taxon>
        <taxon>malvids</taxon>
        <taxon>Malvales</taxon>
        <taxon>Malvaceae</taxon>
        <taxon>Malvoideae</taxon>
        <taxon>Gossypium</taxon>
    </lineage>
</organism>
<dbReference type="EMBL" id="AF116243">
    <property type="protein sequence ID" value="AAD22451.1"/>
    <property type="molecule type" value="mRNA"/>
</dbReference>
<dbReference type="RefSeq" id="NP_001314021.1">
    <property type="nucleotide sequence ID" value="NM_001327092.1"/>
</dbReference>
<dbReference type="SMR" id="Q9XER8"/>
<dbReference type="STRING" id="3635.Q9XER8"/>
<dbReference type="PaxDb" id="3635-Q9XER8"/>
<dbReference type="GeneID" id="107913905"/>
<dbReference type="KEGG" id="ghi:107897195"/>
<dbReference type="KEGG" id="ghi:107913905"/>
<dbReference type="Proteomes" id="UP000189702">
    <property type="component" value="Unplaced"/>
</dbReference>
<dbReference type="GO" id="GO:0005886">
    <property type="term" value="C:plasma membrane"/>
    <property type="evidence" value="ECO:0007669"/>
    <property type="project" value="UniProtKB-SubCell"/>
</dbReference>
<dbReference type="GO" id="GO:0005774">
    <property type="term" value="C:vacuolar membrane"/>
    <property type="evidence" value="ECO:0000318"/>
    <property type="project" value="GO_Central"/>
</dbReference>
<dbReference type="GO" id="GO:0005525">
    <property type="term" value="F:GTP binding"/>
    <property type="evidence" value="ECO:0007669"/>
    <property type="project" value="UniProtKB-KW"/>
</dbReference>
<dbReference type="GO" id="GO:0003924">
    <property type="term" value="F:GTPase activity"/>
    <property type="evidence" value="ECO:0007669"/>
    <property type="project" value="InterPro"/>
</dbReference>
<dbReference type="GO" id="GO:0015031">
    <property type="term" value="P:protein transport"/>
    <property type="evidence" value="ECO:0007669"/>
    <property type="project" value="UniProtKB-KW"/>
</dbReference>
<dbReference type="CDD" id="cd01862">
    <property type="entry name" value="Rab7"/>
    <property type="match status" value="1"/>
</dbReference>
<dbReference type="FunFam" id="3.40.50.300:FF:000295">
    <property type="entry name" value="Ras-related protein Rab7"/>
    <property type="match status" value="1"/>
</dbReference>
<dbReference type="Gene3D" id="3.40.50.300">
    <property type="entry name" value="P-loop containing nucleotide triphosphate hydrolases"/>
    <property type="match status" value="1"/>
</dbReference>
<dbReference type="InterPro" id="IPR027417">
    <property type="entry name" value="P-loop_NTPase"/>
</dbReference>
<dbReference type="InterPro" id="IPR005225">
    <property type="entry name" value="Small_GTP-bd"/>
</dbReference>
<dbReference type="InterPro" id="IPR001806">
    <property type="entry name" value="Small_GTPase"/>
</dbReference>
<dbReference type="NCBIfam" id="TIGR00231">
    <property type="entry name" value="small_GTP"/>
    <property type="match status" value="1"/>
</dbReference>
<dbReference type="PANTHER" id="PTHR47981">
    <property type="entry name" value="RAB FAMILY"/>
    <property type="match status" value="1"/>
</dbReference>
<dbReference type="PANTHER" id="PTHR47981:SF20">
    <property type="entry name" value="RAS-RELATED PROTEIN RAB-7A"/>
    <property type="match status" value="1"/>
</dbReference>
<dbReference type="Pfam" id="PF00071">
    <property type="entry name" value="Ras"/>
    <property type="match status" value="1"/>
</dbReference>
<dbReference type="PRINTS" id="PR00449">
    <property type="entry name" value="RASTRNSFRMNG"/>
</dbReference>
<dbReference type="SMART" id="SM00175">
    <property type="entry name" value="RAB"/>
    <property type="match status" value="1"/>
</dbReference>
<dbReference type="SMART" id="SM00176">
    <property type="entry name" value="RAN"/>
    <property type="match status" value="1"/>
</dbReference>
<dbReference type="SMART" id="SM00173">
    <property type="entry name" value="RAS"/>
    <property type="match status" value="1"/>
</dbReference>
<dbReference type="SMART" id="SM00174">
    <property type="entry name" value="RHO"/>
    <property type="match status" value="1"/>
</dbReference>
<dbReference type="SUPFAM" id="SSF52540">
    <property type="entry name" value="P-loop containing nucleoside triphosphate hydrolases"/>
    <property type="match status" value="1"/>
</dbReference>
<dbReference type="PROSITE" id="PS51419">
    <property type="entry name" value="RAB"/>
    <property type="match status" value="1"/>
</dbReference>
<accession>Q9XER8</accession>
<name>RAB7_GOSHI</name>
<feature type="chain" id="PRO_0000121281" description="Ras-related protein Rab7">
    <location>
        <begin position="1"/>
        <end position="207"/>
    </location>
</feature>
<feature type="binding site" evidence="1">
    <location>
        <begin position="15"/>
        <end position="22"/>
    </location>
    <ligand>
        <name>GTP</name>
        <dbReference type="ChEBI" id="CHEBI:37565"/>
    </ligand>
</feature>
<feature type="binding site" evidence="1">
    <location>
        <begin position="63"/>
        <end position="67"/>
    </location>
    <ligand>
        <name>GTP</name>
        <dbReference type="ChEBI" id="CHEBI:37565"/>
    </ligand>
</feature>
<feature type="binding site" evidence="1">
    <location>
        <begin position="125"/>
        <end position="128"/>
    </location>
    <ligand>
        <name>GTP</name>
        <dbReference type="ChEBI" id="CHEBI:37565"/>
    </ligand>
</feature>
<feature type="modified residue" description="Cysteine methyl ester" evidence="1">
    <location>
        <position position="207"/>
    </location>
</feature>
<feature type="lipid moiety-binding region" description="S-geranylgeranyl cysteine" evidence="1">
    <location>
        <position position="205"/>
    </location>
</feature>
<feature type="lipid moiety-binding region" description="S-geranylgeranyl cysteine" evidence="1">
    <location>
        <position position="207"/>
    </location>
</feature>
<evidence type="ECO:0000250" key="1"/>
<evidence type="ECO:0000305" key="2"/>
<comment type="function">
    <text evidence="1">Protein transport. Probably involved in vesicular traffic (By similarity).</text>
</comment>
<comment type="subcellular location">
    <subcellularLocation>
        <location evidence="2">Cell membrane</location>
        <topology evidence="2">Lipid-anchor</topology>
        <orientation evidence="2">Cytoplasmic side</orientation>
    </subcellularLocation>
</comment>
<comment type="similarity">
    <text evidence="2">Belongs to the small GTPase superfamily. Rab family.</text>
</comment>
<proteinExistence type="evidence at transcript level"/>
<gene>
    <name type="primary">RAB7</name>
</gene>